<name>LGT_POLNA</name>
<organism>
    <name type="scientific">Polaromonas naphthalenivorans (strain CJ2)</name>
    <dbReference type="NCBI Taxonomy" id="365044"/>
    <lineage>
        <taxon>Bacteria</taxon>
        <taxon>Pseudomonadati</taxon>
        <taxon>Pseudomonadota</taxon>
        <taxon>Betaproteobacteria</taxon>
        <taxon>Burkholderiales</taxon>
        <taxon>Comamonadaceae</taxon>
        <taxon>Polaromonas</taxon>
    </lineage>
</organism>
<evidence type="ECO:0000255" key="1">
    <source>
        <dbReference type="HAMAP-Rule" id="MF_01147"/>
    </source>
</evidence>
<reference key="1">
    <citation type="journal article" date="2009" name="Environ. Microbiol.">
        <title>The genome of Polaromonas naphthalenivorans strain CJ2, isolated from coal tar-contaminated sediment, reveals physiological and metabolic versatility and evolution through extensive horizontal gene transfer.</title>
        <authorList>
            <person name="Yagi J.M."/>
            <person name="Sims D."/>
            <person name="Brettin T."/>
            <person name="Bruce D."/>
            <person name="Madsen E.L."/>
        </authorList>
    </citation>
    <scope>NUCLEOTIDE SEQUENCE [LARGE SCALE GENOMIC DNA]</scope>
    <source>
        <strain>CJ2</strain>
    </source>
</reference>
<comment type="function">
    <text evidence="1">Catalyzes the transfer of the diacylglyceryl group from phosphatidylglycerol to the sulfhydryl group of the N-terminal cysteine of a prolipoprotein, the first step in the formation of mature lipoproteins.</text>
</comment>
<comment type="catalytic activity">
    <reaction evidence="1">
        <text>L-cysteinyl-[prolipoprotein] + a 1,2-diacyl-sn-glycero-3-phospho-(1'-sn-glycerol) = an S-1,2-diacyl-sn-glyceryl-L-cysteinyl-[prolipoprotein] + sn-glycerol 1-phosphate + H(+)</text>
        <dbReference type="Rhea" id="RHEA:56712"/>
        <dbReference type="Rhea" id="RHEA-COMP:14679"/>
        <dbReference type="Rhea" id="RHEA-COMP:14680"/>
        <dbReference type="ChEBI" id="CHEBI:15378"/>
        <dbReference type="ChEBI" id="CHEBI:29950"/>
        <dbReference type="ChEBI" id="CHEBI:57685"/>
        <dbReference type="ChEBI" id="CHEBI:64716"/>
        <dbReference type="ChEBI" id="CHEBI:140658"/>
        <dbReference type="EC" id="2.5.1.145"/>
    </reaction>
</comment>
<comment type="pathway">
    <text evidence="1">Protein modification; lipoprotein biosynthesis (diacylglyceryl transfer).</text>
</comment>
<comment type="subcellular location">
    <subcellularLocation>
        <location evidence="1">Cell inner membrane</location>
        <topology evidence="1">Multi-pass membrane protein</topology>
    </subcellularLocation>
</comment>
<comment type="similarity">
    <text evidence="1">Belongs to the Lgt family.</text>
</comment>
<gene>
    <name evidence="1" type="primary">lgt</name>
    <name type="ordered locus">Pnap_2874</name>
</gene>
<feature type="chain" id="PRO_1000053464" description="Phosphatidylglycerol--prolipoprotein diacylglyceryl transferase">
    <location>
        <begin position="1"/>
        <end position="271"/>
    </location>
</feature>
<feature type="transmembrane region" description="Helical" evidence="1">
    <location>
        <begin position="17"/>
        <end position="37"/>
    </location>
</feature>
<feature type="transmembrane region" description="Helical" evidence="1">
    <location>
        <begin position="63"/>
        <end position="83"/>
    </location>
</feature>
<feature type="transmembrane region" description="Helical" evidence="1">
    <location>
        <begin position="95"/>
        <end position="115"/>
    </location>
</feature>
<feature type="transmembrane region" description="Helical" evidence="1">
    <location>
        <begin position="182"/>
        <end position="202"/>
    </location>
</feature>
<feature type="transmembrane region" description="Helical" evidence="1">
    <location>
        <begin position="209"/>
        <end position="229"/>
    </location>
</feature>
<feature type="transmembrane region" description="Helical" evidence="1">
    <location>
        <begin position="243"/>
        <end position="263"/>
    </location>
</feature>
<feature type="binding site" evidence="1">
    <location>
        <position position="146"/>
    </location>
    <ligand>
        <name>a 1,2-diacyl-sn-glycero-3-phospho-(1'-sn-glycerol)</name>
        <dbReference type="ChEBI" id="CHEBI:64716"/>
    </ligand>
</feature>
<protein>
    <recommendedName>
        <fullName evidence="1">Phosphatidylglycerol--prolipoprotein diacylglyceryl transferase</fullName>
        <ecNumber evidence="1">2.5.1.145</ecNumber>
    </recommendedName>
</protein>
<accession>A1VR95</accession>
<sequence>MLIHPEINPVALQLGPLAIHWYGLTYLAAFGLFFFLASLRLRHEPYASITGPGAWSRRDIEDILFLGVMGVVIGGRLGYCLFYKPGYYLTHPLEIFAVWQGGMSFHGGMLGVLVSQWWFARSRQRPWLQVMDFIAPCVPTGLAAGRVGNFINGELWGRFSAPDLPWGMVFAHSGSMLPRHPSQVYQFLMEGLLLFVLLWLYARKPRKMGQVSGAFLVGYGVFRFIAEFFREPDDFLGILALGMSMGQWLCVPMIAAGIWLWIWASNRTSRR</sequence>
<proteinExistence type="inferred from homology"/>
<keyword id="KW-0997">Cell inner membrane</keyword>
<keyword id="KW-1003">Cell membrane</keyword>
<keyword id="KW-0472">Membrane</keyword>
<keyword id="KW-1185">Reference proteome</keyword>
<keyword id="KW-0808">Transferase</keyword>
<keyword id="KW-0812">Transmembrane</keyword>
<keyword id="KW-1133">Transmembrane helix</keyword>
<dbReference type="EC" id="2.5.1.145" evidence="1"/>
<dbReference type="EMBL" id="CP000529">
    <property type="protein sequence ID" value="ABM38173.1"/>
    <property type="molecule type" value="Genomic_DNA"/>
</dbReference>
<dbReference type="RefSeq" id="WP_011802249.1">
    <property type="nucleotide sequence ID" value="NC_008781.1"/>
</dbReference>
<dbReference type="SMR" id="A1VR95"/>
<dbReference type="STRING" id="365044.Pnap_2874"/>
<dbReference type="KEGG" id="pna:Pnap_2874"/>
<dbReference type="eggNOG" id="COG0682">
    <property type="taxonomic scope" value="Bacteria"/>
</dbReference>
<dbReference type="HOGENOM" id="CLU_013386_1_0_4"/>
<dbReference type="OrthoDB" id="871140at2"/>
<dbReference type="UniPathway" id="UPA00664"/>
<dbReference type="Proteomes" id="UP000000644">
    <property type="component" value="Chromosome"/>
</dbReference>
<dbReference type="GO" id="GO:0005886">
    <property type="term" value="C:plasma membrane"/>
    <property type="evidence" value="ECO:0007669"/>
    <property type="project" value="UniProtKB-SubCell"/>
</dbReference>
<dbReference type="GO" id="GO:0008961">
    <property type="term" value="F:phosphatidylglycerol-prolipoprotein diacylglyceryl transferase activity"/>
    <property type="evidence" value="ECO:0007669"/>
    <property type="project" value="UniProtKB-UniRule"/>
</dbReference>
<dbReference type="GO" id="GO:0042158">
    <property type="term" value="P:lipoprotein biosynthetic process"/>
    <property type="evidence" value="ECO:0007669"/>
    <property type="project" value="UniProtKB-UniRule"/>
</dbReference>
<dbReference type="HAMAP" id="MF_01147">
    <property type="entry name" value="Lgt"/>
    <property type="match status" value="1"/>
</dbReference>
<dbReference type="InterPro" id="IPR001640">
    <property type="entry name" value="Lgt"/>
</dbReference>
<dbReference type="NCBIfam" id="TIGR00544">
    <property type="entry name" value="lgt"/>
    <property type="match status" value="1"/>
</dbReference>
<dbReference type="PANTHER" id="PTHR30589:SF0">
    <property type="entry name" value="PHOSPHATIDYLGLYCEROL--PROLIPOPROTEIN DIACYLGLYCERYL TRANSFERASE"/>
    <property type="match status" value="1"/>
</dbReference>
<dbReference type="PANTHER" id="PTHR30589">
    <property type="entry name" value="PROLIPOPROTEIN DIACYLGLYCERYL TRANSFERASE"/>
    <property type="match status" value="1"/>
</dbReference>
<dbReference type="Pfam" id="PF01790">
    <property type="entry name" value="LGT"/>
    <property type="match status" value="1"/>
</dbReference>
<dbReference type="PROSITE" id="PS01311">
    <property type="entry name" value="LGT"/>
    <property type="match status" value="1"/>
</dbReference>